<dbReference type="EC" id="2.7.1.5" evidence="1"/>
<dbReference type="EMBL" id="CP000647">
    <property type="protein sequence ID" value="ABR79592.1"/>
    <property type="molecule type" value="Genomic_DNA"/>
</dbReference>
<dbReference type="RefSeq" id="WP_004187190.1">
    <property type="nucleotide sequence ID" value="NC_009648.1"/>
</dbReference>
<dbReference type="SMR" id="A6TGA8"/>
<dbReference type="STRING" id="272620.KPN_04213"/>
<dbReference type="PaxDb" id="272620-KPN_04213"/>
<dbReference type="EnsemblBacteria" id="ABR79592">
    <property type="protein sequence ID" value="ABR79592"/>
    <property type="gene ID" value="KPN_04213"/>
</dbReference>
<dbReference type="KEGG" id="kpn:KPN_04213"/>
<dbReference type="HOGENOM" id="CLU_039395_0_0_6"/>
<dbReference type="UniPathway" id="UPA00541">
    <property type="reaction ID" value="UER00602"/>
</dbReference>
<dbReference type="Proteomes" id="UP000000265">
    <property type="component" value="Chromosome"/>
</dbReference>
<dbReference type="GO" id="GO:0005829">
    <property type="term" value="C:cytosol"/>
    <property type="evidence" value="ECO:0007669"/>
    <property type="project" value="TreeGrafter"/>
</dbReference>
<dbReference type="GO" id="GO:0005524">
    <property type="term" value="F:ATP binding"/>
    <property type="evidence" value="ECO:0007669"/>
    <property type="project" value="UniProtKB-KW"/>
</dbReference>
<dbReference type="GO" id="GO:0004370">
    <property type="term" value="F:glycerol kinase activity"/>
    <property type="evidence" value="ECO:0007669"/>
    <property type="project" value="TreeGrafter"/>
</dbReference>
<dbReference type="GO" id="GO:0008993">
    <property type="term" value="F:rhamnulokinase activity"/>
    <property type="evidence" value="ECO:0007669"/>
    <property type="project" value="UniProtKB-UniRule"/>
</dbReference>
<dbReference type="GO" id="GO:0006071">
    <property type="term" value="P:glycerol metabolic process"/>
    <property type="evidence" value="ECO:0007669"/>
    <property type="project" value="TreeGrafter"/>
</dbReference>
<dbReference type="GO" id="GO:0019301">
    <property type="term" value="P:rhamnose catabolic process"/>
    <property type="evidence" value="ECO:0007669"/>
    <property type="project" value="UniProtKB-UniRule"/>
</dbReference>
<dbReference type="CDD" id="cd07771">
    <property type="entry name" value="ASKHA_NBD_FGGY_RhaB-like"/>
    <property type="match status" value="1"/>
</dbReference>
<dbReference type="FunFam" id="3.30.420.40:FF:000064">
    <property type="entry name" value="Rhamnulokinase"/>
    <property type="match status" value="1"/>
</dbReference>
<dbReference type="FunFam" id="3.30.420.40:FF:000073">
    <property type="entry name" value="Rhamnulokinase"/>
    <property type="match status" value="1"/>
</dbReference>
<dbReference type="Gene3D" id="3.30.420.40">
    <property type="match status" value="2"/>
</dbReference>
<dbReference type="HAMAP" id="MF_01535">
    <property type="entry name" value="Rhamnulokinase"/>
    <property type="match status" value="1"/>
</dbReference>
<dbReference type="InterPro" id="IPR043129">
    <property type="entry name" value="ATPase_NBD"/>
</dbReference>
<dbReference type="InterPro" id="IPR018485">
    <property type="entry name" value="FGGY_C"/>
</dbReference>
<dbReference type="InterPro" id="IPR018484">
    <property type="entry name" value="FGGY_N"/>
</dbReference>
<dbReference type="InterPro" id="IPR013449">
    <property type="entry name" value="Rhamnulokinase"/>
</dbReference>
<dbReference type="NCBIfam" id="NF007925">
    <property type="entry name" value="PRK10640.1"/>
    <property type="match status" value="1"/>
</dbReference>
<dbReference type="NCBIfam" id="TIGR02627">
    <property type="entry name" value="rhamnulo_kin"/>
    <property type="match status" value="1"/>
</dbReference>
<dbReference type="PANTHER" id="PTHR10196:SF93">
    <property type="entry name" value="L-RHAMNULOKINASE"/>
    <property type="match status" value="1"/>
</dbReference>
<dbReference type="PANTHER" id="PTHR10196">
    <property type="entry name" value="SUGAR KINASE"/>
    <property type="match status" value="1"/>
</dbReference>
<dbReference type="Pfam" id="PF02782">
    <property type="entry name" value="FGGY_C"/>
    <property type="match status" value="1"/>
</dbReference>
<dbReference type="Pfam" id="PF00370">
    <property type="entry name" value="FGGY_N"/>
    <property type="match status" value="1"/>
</dbReference>
<dbReference type="SUPFAM" id="SSF53067">
    <property type="entry name" value="Actin-like ATPase domain"/>
    <property type="match status" value="2"/>
</dbReference>
<reference key="1">
    <citation type="submission" date="2006-09" db="EMBL/GenBank/DDBJ databases">
        <authorList>
            <consortium name="The Klebsiella pneumonia Genome Sequencing Project"/>
            <person name="McClelland M."/>
            <person name="Sanderson E.K."/>
            <person name="Spieth J."/>
            <person name="Clifton W.S."/>
            <person name="Latreille P."/>
            <person name="Sabo A."/>
            <person name="Pepin K."/>
            <person name="Bhonagiri V."/>
            <person name="Porwollik S."/>
            <person name="Ali J."/>
            <person name="Wilson R.K."/>
        </authorList>
    </citation>
    <scope>NUCLEOTIDE SEQUENCE [LARGE SCALE GENOMIC DNA]</scope>
    <source>
        <strain>ATCC 700721 / MGH 78578</strain>
    </source>
</reference>
<accession>A6TGA8</accession>
<gene>
    <name evidence="1" type="primary">rhaB</name>
    <name type="ordered locus">KPN78578_41680</name>
    <name type="ORF">KPN_04213</name>
</gene>
<comment type="function">
    <text evidence="1">Involved in the catabolism of L-rhamnose (6-deoxy-L-mannose). Catalyzes the transfer of the gamma-phosphate group from ATP to the 1-hydroxyl group of L-rhamnulose to yield L-rhamnulose 1-phosphate.</text>
</comment>
<comment type="catalytic activity">
    <reaction evidence="1">
        <text>L-rhamnulose + ATP = L-rhamnulose 1-phosphate + ADP + H(+)</text>
        <dbReference type="Rhea" id="RHEA:20117"/>
        <dbReference type="ChEBI" id="CHEBI:15378"/>
        <dbReference type="ChEBI" id="CHEBI:17897"/>
        <dbReference type="ChEBI" id="CHEBI:30616"/>
        <dbReference type="ChEBI" id="CHEBI:58313"/>
        <dbReference type="ChEBI" id="CHEBI:456216"/>
        <dbReference type="EC" id="2.7.1.5"/>
    </reaction>
</comment>
<comment type="cofactor">
    <cofactor evidence="1">
        <name>Mg(2+)</name>
        <dbReference type="ChEBI" id="CHEBI:18420"/>
    </cofactor>
</comment>
<comment type="pathway">
    <text evidence="1">Carbohydrate degradation; L-rhamnose degradation; glycerone phosphate from L-rhamnose: step 2/3.</text>
</comment>
<comment type="similarity">
    <text evidence="1">Belongs to the rhamnulokinase family.</text>
</comment>
<organism>
    <name type="scientific">Klebsiella pneumoniae subsp. pneumoniae (strain ATCC 700721 / MGH 78578)</name>
    <dbReference type="NCBI Taxonomy" id="272620"/>
    <lineage>
        <taxon>Bacteria</taxon>
        <taxon>Pseudomonadati</taxon>
        <taxon>Pseudomonadota</taxon>
        <taxon>Gammaproteobacteria</taxon>
        <taxon>Enterobacterales</taxon>
        <taxon>Enterobacteriaceae</taxon>
        <taxon>Klebsiella/Raoultella group</taxon>
        <taxon>Klebsiella</taxon>
        <taxon>Klebsiella pneumoniae complex</taxon>
    </lineage>
</organism>
<feature type="chain" id="PRO_1000068718" description="Rhamnulokinase">
    <location>
        <begin position="1"/>
        <end position="488"/>
    </location>
</feature>
<feature type="active site" description="Proton acceptor" evidence="1">
    <location>
        <position position="237"/>
    </location>
</feature>
<feature type="binding site" evidence="1">
    <location>
        <begin position="13"/>
        <end position="17"/>
    </location>
    <ligand>
        <name>ATP</name>
        <dbReference type="ChEBI" id="CHEBI:30616"/>
    </ligand>
</feature>
<feature type="binding site" evidence="1">
    <location>
        <position position="83"/>
    </location>
    <ligand>
        <name>substrate</name>
    </ligand>
</feature>
<feature type="binding site" evidence="1">
    <location>
        <begin position="236"/>
        <end position="238"/>
    </location>
    <ligand>
        <name>substrate</name>
    </ligand>
</feature>
<feature type="binding site" evidence="1">
    <location>
        <position position="259"/>
    </location>
    <ligand>
        <name>ATP</name>
        <dbReference type="ChEBI" id="CHEBI:30616"/>
    </ligand>
</feature>
<feature type="binding site" evidence="1">
    <location>
        <position position="296"/>
    </location>
    <ligand>
        <name>substrate</name>
    </ligand>
</feature>
<feature type="binding site" evidence="1">
    <location>
        <position position="304"/>
    </location>
    <ligand>
        <name>ATP</name>
        <dbReference type="ChEBI" id="CHEBI:30616"/>
    </ligand>
</feature>
<feature type="binding site" evidence="1">
    <location>
        <position position="402"/>
    </location>
    <ligand>
        <name>ATP</name>
        <dbReference type="ChEBI" id="CHEBI:30616"/>
    </ligand>
</feature>
<feature type="disulfide bond" evidence="1">
    <location>
        <begin position="68"/>
        <end position="222"/>
    </location>
</feature>
<feature type="disulfide bond" evidence="1">
    <location>
        <begin position="353"/>
        <end position="370"/>
    </location>
</feature>
<feature type="disulfide bond" evidence="1">
    <location>
        <begin position="413"/>
        <end position="417"/>
    </location>
</feature>
<sequence length="488" mass="53502">MSIRHCVAVDLGASSGRVMLASYQPGPRALTLREIHRFTNSLQKVDGFDCWDVDSLEGEIRRGLEKVCEQGILIDSIGIDTWGVDYVLLDKQGQRVGLPISYRDDRTQGLLRHAEAQLGRAEIYRRSGIQFLPFNTLYQLRALVEQQPELVSQAAHALLIPDYFSFRLTGNLNWEYTNATTTQLVNINSDSWDETLLNWTGAPLAWFGKPTHPGNVIGHWICPQGNRIPVVAVASHDTASAVIASPLADRHAAYLSSGTWSLMGFESLTPYTCDAALQANITNEGGAEGRYRVLKNIMGLWLLQRVLKEQNVSDLQGLIARTAALPACRFIIDCNDDRFINPASMSAEIQAACRDAGQPVPESDAELARCIFDSLALLYARVLNELAALRGHPFSQLHIVGGGCQNTLLNQLCADACGIVVVAGPIEASTLGNIGIQLMTLDELANVDEFRQVVRGNAALTTFTPNPDSEIARFVAQFQPQQTKELCA</sequence>
<evidence type="ECO:0000255" key="1">
    <source>
        <dbReference type="HAMAP-Rule" id="MF_01535"/>
    </source>
</evidence>
<keyword id="KW-0067">ATP-binding</keyword>
<keyword id="KW-1015">Disulfide bond</keyword>
<keyword id="KW-0418">Kinase</keyword>
<keyword id="KW-0547">Nucleotide-binding</keyword>
<keyword id="KW-0684">Rhamnose metabolism</keyword>
<keyword id="KW-0808">Transferase</keyword>
<proteinExistence type="inferred from homology"/>
<name>RHAB_KLEP7</name>
<protein>
    <recommendedName>
        <fullName evidence="1">Rhamnulokinase</fullName>
        <shortName evidence="1">RhaB</shortName>
        <ecNumber evidence="1">2.7.1.5</ecNumber>
    </recommendedName>
    <alternativeName>
        <fullName evidence="1">ATP:L-rhamnulose phosphotransferase</fullName>
    </alternativeName>
    <alternativeName>
        <fullName evidence="1">L-rhamnulose 1-kinase</fullName>
    </alternativeName>
    <alternativeName>
        <fullName evidence="1">Rhamnulose kinase</fullName>
    </alternativeName>
</protein>